<evidence type="ECO:0000255" key="1">
    <source>
        <dbReference type="HAMAP-Rule" id="MF_00457"/>
    </source>
</evidence>
<feature type="chain" id="PRO_1000197811" description="UPF0173 metal-dependent hydrolase BCQ_4418">
    <location>
        <begin position="1"/>
        <end position="227"/>
    </location>
</feature>
<name>Y4418_BACCQ</name>
<gene>
    <name type="ordered locus">BCQ_4418</name>
</gene>
<accession>B9J0B4</accession>
<comment type="similarity">
    <text evidence="1">Belongs to the UPF0173 family.</text>
</comment>
<reference key="1">
    <citation type="journal article" date="2009" name="J. Bacteriol.">
        <title>Complete genome sequence of the extremophilic Bacillus cereus strain Q1 with industrial applications.</title>
        <authorList>
            <person name="Xiong Z."/>
            <person name="Jiang Y."/>
            <person name="Qi D."/>
            <person name="Lu H."/>
            <person name="Yang F."/>
            <person name="Yang J."/>
            <person name="Chen L."/>
            <person name="Sun L."/>
            <person name="Xu X."/>
            <person name="Xue Y."/>
            <person name="Zhu Y."/>
            <person name="Jin Q."/>
        </authorList>
    </citation>
    <scope>NUCLEOTIDE SEQUENCE [LARGE SCALE GENOMIC DNA]</scope>
    <source>
        <strain>Q1</strain>
    </source>
</reference>
<dbReference type="EMBL" id="CP000227">
    <property type="protein sequence ID" value="ACM14844.1"/>
    <property type="molecule type" value="Genomic_DNA"/>
</dbReference>
<dbReference type="SMR" id="B9J0B4"/>
<dbReference type="KEGG" id="bcq:BCQ_4418"/>
<dbReference type="HOGENOM" id="CLU_070010_4_1_9"/>
<dbReference type="Proteomes" id="UP000000441">
    <property type="component" value="Chromosome"/>
</dbReference>
<dbReference type="GO" id="GO:0016787">
    <property type="term" value="F:hydrolase activity"/>
    <property type="evidence" value="ECO:0007669"/>
    <property type="project" value="UniProtKB-UniRule"/>
</dbReference>
<dbReference type="Gene3D" id="3.60.15.10">
    <property type="entry name" value="Ribonuclease Z/Hydroxyacylglutathione hydrolase-like"/>
    <property type="match status" value="1"/>
</dbReference>
<dbReference type="HAMAP" id="MF_00457">
    <property type="entry name" value="UPF0173"/>
    <property type="match status" value="1"/>
</dbReference>
<dbReference type="InterPro" id="IPR001279">
    <property type="entry name" value="Metallo-B-lactamas"/>
</dbReference>
<dbReference type="InterPro" id="IPR036866">
    <property type="entry name" value="RibonucZ/Hydroxyglut_hydro"/>
</dbReference>
<dbReference type="InterPro" id="IPR022877">
    <property type="entry name" value="UPF0173"/>
</dbReference>
<dbReference type="InterPro" id="IPR050114">
    <property type="entry name" value="UPF0173_UPF0282_UlaG_hydrolase"/>
</dbReference>
<dbReference type="NCBIfam" id="NF001911">
    <property type="entry name" value="PRK00685.1"/>
    <property type="match status" value="1"/>
</dbReference>
<dbReference type="PANTHER" id="PTHR43546:SF3">
    <property type="entry name" value="UPF0173 METAL-DEPENDENT HYDROLASE MJ1163"/>
    <property type="match status" value="1"/>
</dbReference>
<dbReference type="PANTHER" id="PTHR43546">
    <property type="entry name" value="UPF0173 METAL-DEPENDENT HYDROLASE MJ1163-RELATED"/>
    <property type="match status" value="1"/>
</dbReference>
<dbReference type="Pfam" id="PF12706">
    <property type="entry name" value="Lactamase_B_2"/>
    <property type="match status" value="1"/>
</dbReference>
<dbReference type="SMART" id="SM00849">
    <property type="entry name" value="Lactamase_B"/>
    <property type="match status" value="1"/>
</dbReference>
<dbReference type="SUPFAM" id="SSF56281">
    <property type="entry name" value="Metallo-hydrolase/oxidoreductase"/>
    <property type="match status" value="1"/>
</dbReference>
<keyword id="KW-0378">Hydrolase</keyword>
<sequence>MKVSYHGHSVVKIETNGKVMLIDPFLTGNPKTDLKAEDVKVDAILLSHGHGDHVGDTVELAKKNNAVVVAPFELATFLSWQGVKTHPMHIGGSHEFDFGKVKFTQAFHGSSYIDEENKTITYTGMPAGILFTAEEKTLYHAGDTALFSDMKLIGELNNVDVAFLPIGDNFTMGPEDAVLAAKWVQAKTVVPMHYNTFPVIEQDPYQFVEKLQNCTGKVLEAGESITL</sequence>
<organism>
    <name type="scientific">Bacillus cereus (strain Q1)</name>
    <dbReference type="NCBI Taxonomy" id="361100"/>
    <lineage>
        <taxon>Bacteria</taxon>
        <taxon>Bacillati</taxon>
        <taxon>Bacillota</taxon>
        <taxon>Bacilli</taxon>
        <taxon>Bacillales</taxon>
        <taxon>Bacillaceae</taxon>
        <taxon>Bacillus</taxon>
        <taxon>Bacillus cereus group</taxon>
    </lineage>
</organism>
<protein>
    <recommendedName>
        <fullName evidence="1">UPF0173 metal-dependent hydrolase BCQ_4418</fullName>
    </recommendedName>
</protein>
<proteinExistence type="inferred from homology"/>